<protein>
    <recommendedName>
        <fullName evidence="1">2-keto-3-deoxy-L-rhamnonate aldolase</fullName>
        <shortName evidence="1">KDR aldolase</shortName>
        <ecNumber evidence="1">4.1.2.53</ecNumber>
    </recommendedName>
    <alternativeName>
        <fullName evidence="1">2-dehydro-3-deoxyrhamnonate aldolase</fullName>
    </alternativeName>
</protein>
<comment type="function">
    <text evidence="1">Catalyzes the reversible retro-aldol cleavage of 2-keto-3-deoxy-L-rhamnonate (KDR) to pyruvate and lactaldehyde.</text>
</comment>
<comment type="catalytic activity">
    <reaction evidence="1">
        <text>2-dehydro-3-deoxy-L-rhamnonate = (S)-lactaldehyde + pyruvate</text>
        <dbReference type="Rhea" id="RHEA:25784"/>
        <dbReference type="ChEBI" id="CHEBI:15361"/>
        <dbReference type="ChEBI" id="CHEBI:18041"/>
        <dbReference type="ChEBI" id="CHEBI:58371"/>
        <dbReference type="EC" id="4.1.2.53"/>
    </reaction>
</comment>
<comment type="cofactor">
    <cofactor evidence="1">
        <name>Mg(2+)</name>
        <dbReference type="ChEBI" id="CHEBI:18420"/>
    </cofactor>
    <text evidence="1">Binds 1 Mg(2+) ion per subunit.</text>
</comment>
<comment type="subunit">
    <text evidence="1">Homohexamer.</text>
</comment>
<comment type="similarity">
    <text evidence="1">Belongs to the HpcH/HpaI aldolase family. KDR aldolase subfamily.</text>
</comment>
<evidence type="ECO:0000255" key="1">
    <source>
        <dbReference type="HAMAP-Rule" id="MF_01290"/>
    </source>
</evidence>
<feature type="chain" id="PRO_1000140403" description="2-keto-3-deoxy-L-rhamnonate aldolase">
    <location>
        <begin position="1"/>
        <end position="267"/>
    </location>
</feature>
<feature type="active site" description="Proton acceptor" evidence="1">
    <location>
        <position position="49"/>
    </location>
</feature>
<feature type="binding site" evidence="1">
    <location>
        <position position="151"/>
    </location>
    <ligand>
        <name>substrate</name>
    </ligand>
</feature>
<feature type="binding site" evidence="1">
    <location>
        <position position="153"/>
    </location>
    <ligand>
        <name>Mg(2+)</name>
        <dbReference type="ChEBI" id="CHEBI:18420"/>
    </ligand>
</feature>
<feature type="binding site" evidence="1">
    <location>
        <position position="178"/>
    </location>
    <ligand>
        <name>substrate</name>
    </ligand>
</feature>
<feature type="binding site" evidence="1">
    <location>
        <position position="179"/>
    </location>
    <ligand>
        <name>Mg(2+)</name>
        <dbReference type="ChEBI" id="CHEBI:18420"/>
    </ligand>
</feature>
<feature type="binding site" evidence="1">
    <location>
        <position position="179"/>
    </location>
    <ligand>
        <name>substrate</name>
    </ligand>
</feature>
<feature type="site" description="Transition state stabilizer" evidence="1">
    <location>
        <position position="74"/>
    </location>
</feature>
<feature type="site" description="Increases basicity of active site His" evidence="1">
    <location>
        <position position="88"/>
    </location>
</feature>
<keyword id="KW-0456">Lyase</keyword>
<keyword id="KW-0460">Magnesium</keyword>
<keyword id="KW-0479">Metal-binding</keyword>
<gene>
    <name evidence="1" type="primary">rhmA</name>
    <name type="ordered locus">SeSA_A2517</name>
</gene>
<reference key="1">
    <citation type="journal article" date="2011" name="J. Bacteriol.">
        <title>Comparative genomics of 28 Salmonella enterica isolates: evidence for CRISPR-mediated adaptive sublineage evolution.</title>
        <authorList>
            <person name="Fricke W.F."/>
            <person name="Mammel M.K."/>
            <person name="McDermott P.F."/>
            <person name="Tartera C."/>
            <person name="White D.G."/>
            <person name="Leclerc J.E."/>
            <person name="Ravel J."/>
            <person name="Cebula T.A."/>
        </authorList>
    </citation>
    <scope>NUCLEOTIDE SEQUENCE [LARGE SCALE GENOMIC DNA]</scope>
    <source>
        <strain>CVM19633</strain>
    </source>
</reference>
<accession>B4TPH2</accession>
<name>RHMA_SALSV</name>
<sequence>MNALLSNPFKEGLRKGDTQIGLWLSSTTSYMAEIAATSGYDWLLIDGEHAPNTVQDLYHQLQAIAPYASQPVIRPIEGSKALIKQVLDIGAQTLLIPMVDTAEQARQVVSATRYPPLGQRGVGASVARAARWGRIDNYMAQANESLCLLVQVESKVALENLDAILEVEGIDGVFIGPADLSASLGYPDNAGHPEVQRIIEACIYRIRAAGKAAGFLAVDPAMAQKCLAWGANFVAVGVDTMLYTEALDSRLAMFKSVQSVSTAKRSY</sequence>
<dbReference type="EC" id="4.1.2.53" evidence="1"/>
<dbReference type="EMBL" id="CP001127">
    <property type="protein sequence ID" value="ACF91606.1"/>
    <property type="molecule type" value="Genomic_DNA"/>
</dbReference>
<dbReference type="SMR" id="B4TPH2"/>
<dbReference type="KEGG" id="sew:SeSA_A2517"/>
<dbReference type="HOGENOM" id="CLU_059964_1_0_6"/>
<dbReference type="Proteomes" id="UP000001865">
    <property type="component" value="Chromosome"/>
</dbReference>
<dbReference type="GO" id="GO:0005737">
    <property type="term" value="C:cytoplasm"/>
    <property type="evidence" value="ECO:0007669"/>
    <property type="project" value="TreeGrafter"/>
</dbReference>
<dbReference type="GO" id="GO:0106099">
    <property type="term" value="F:2-keto-3-deoxy-L-rhamnonate aldolase activity"/>
    <property type="evidence" value="ECO:0007669"/>
    <property type="project" value="UniProtKB-EC"/>
</dbReference>
<dbReference type="GO" id="GO:0000287">
    <property type="term" value="F:magnesium ion binding"/>
    <property type="evidence" value="ECO:0007669"/>
    <property type="project" value="UniProtKB-UniRule"/>
</dbReference>
<dbReference type="FunFam" id="3.20.20.60:FF:000004">
    <property type="entry name" value="5-keto-4-deoxy-D-glucarate aldolase"/>
    <property type="match status" value="1"/>
</dbReference>
<dbReference type="Gene3D" id="3.20.20.60">
    <property type="entry name" value="Phosphoenolpyruvate-binding domains"/>
    <property type="match status" value="1"/>
</dbReference>
<dbReference type="HAMAP" id="MF_01290">
    <property type="entry name" value="KDR_aldolase"/>
    <property type="match status" value="1"/>
</dbReference>
<dbReference type="InterPro" id="IPR005000">
    <property type="entry name" value="Aldolase/citrate-lyase_domain"/>
</dbReference>
<dbReference type="InterPro" id="IPR050251">
    <property type="entry name" value="HpcH-HpaI_aldolase"/>
</dbReference>
<dbReference type="InterPro" id="IPR023593">
    <property type="entry name" value="KDR_aldolase"/>
</dbReference>
<dbReference type="InterPro" id="IPR015813">
    <property type="entry name" value="Pyrv/PenolPyrv_kinase-like_dom"/>
</dbReference>
<dbReference type="InterPro" id="IPR040442">
    <property type="entry name" value="Pyrv_kinase-like_dom_sf"/>
</dbReference>
<dbReference type="NCBIfam" id="NF007521">
    <property type="entry name" value="PRK10128.1"/>
    <property type="match status" value="1"/>
</dbReference>
<dbReference type="PANTHER" id="PTHR30502">
    <property type="entry name" value="2-KETO-3-DEOXY-L-RHAMNONATE ALDOLASE"/>
    <property type="match status" value="1"/>
</dbReference>
<dbReference type="PANTHER" id="PTHR30502:SF5">
    <property type="entry name" value="2-KETO-3-DEOXY-L-RHAMNONATE ALDOLASE"/>
    <property type="match status" value="1"/>
</dbReference>
<dbReference type="Pfam" id="PF03328">
    <property type="entry name" value="HpcH_HpaI"/>
    <property type="match status" value="1"/>
</dbReference>
<dbReference type="SUPFAM" id="SSF51621">
    <property type="entry name" value="Phosphoenolpyruvate/pyruvate domain"/>
    <property type="match status" value="1"/>
</dbReference>
<organism>
    <name type="scientific">Salmonella schwarzengrund (strain CVM19633)</name>
    <dbReference type="NCBI Taxonomy" id="439843"/>
    <lineage>
        <taxon>Bacteria</taxon>
        <taxon>Pseudomonadati</taxon>
        <taxon>Pseudomonadota</taxon>
        <taxon>Gammaproteobacteria</taxon>
        <taxon>Enterobacterales</taxon>
        <taxon>Enterobacteriaceae</taxon>
        <taxon>Salmonella</taxon>
    </lineage>
</organism>
<proteinExistence type="inferred from homology"/>